<feature type="chain" id="PRO_0000069681" description="Histamine H2 receptor">
    <location>
        <begin position="1"/>
        <end position="359"/>
    </location>
</feature>
<feature type="topological domain" description="Extracellular" evidence="1">
    <location>
        <begin position="1"/>
        <end position="22"/>
    </location>
</feature>
<feature type="transmembrane region" description="Helical; Name=1" evidence="1">
    <location>
        <begin position="23"/>
        <end position="44"/>
    </location>
</feature>
<feature type="topological domain" description="Cytoplasmic" evidence="1">
    <location>
        <begin position="45"/>
        <end position="57"/>
    </location>
</feature>
<feature type="transmembrane region" description="Helical; Name=2" evidence="1">
    <location>
        <begin position="58"/>
        <end position="81"/>
    </location>
</feature>
<feature type="topological domain" description="Extracellular" evidence="1">
    <location>
        <begin position="82"/>
        <end position="92"/>
    </location>
</feature>
<feature type="transmembrane region" description="Helical; Name=3" evidence="1">
    <location>
        <begin position="93"/>
        <end position="114"/>
    </location>
</feature>
<feature type="topological domain" description="Cytoplasmic" evidence="1">
    <location>
        <begin position="115"/>
        <end position="134"/>
    </location>
</feature>
<feature type="transmembrane region" description="Helical; Name=4" evidence="1">
    <location>
        <begin position="135"/>
        <end position="159"/>
    </location>
</feature>
<feature type="topological domain" description="Extracellular" evidence="1">
    <location>
        <begin position="160"/>
        <end position="180"/>
    </location>
</feature>
<feature type="transmembrane region" description="Helical; Name=5" evidence="1">
    <location>
        <begin position="181"/>
        <end position="204"/>
    </location>
</feature>
<feature type="topological domain" description="Cytoplasmic" evidence="1">
    <location>
        <begin position="205"/>
        <end position="234"/>
    </location>
</feature>
<feature type="transmembrane region" description="Helical; Name=6" evidence="1">
    <location>
        <begin position="235"/>
        <end position="258"/>
    </location>
</feature>
<feature type="topological domain" description="Extracellular" evidence="1">
    <location>
        <begin position="259"/>
        <end position="267"/>
    </location>
</feature>
<feature type="transmembrane region" description="Helical; Name=7" evidence="1">
    <location>
        <begin position="268"/>
        <end position="289"/>
    </location>
</feature>
<feature type="topological domain" description="Cytoplasmic" evidence="1">
    <location>
        <begin position="290"/>
        <end position="359"/>
    </location>
</feature>
<feature type="region of interest" description="Disordered" evidence="3">
    <location>
        <begin position="310"/>
        <end position="359"/>
    </location>
</feature>
<feature type="compositionally biased region" description="Polar residues" evidence="3">
    <location>
        <begin position="310"/>
        <end position="327"/>
    </location>
</feature>
<feature type="compositionally biased region" description="Basic and acidic residues" evidence="3">
    <location>
        <begin position="328"/>
        <end position="340"/>
    </location>
</feature>
<feature type="site" description="Essential for histamine binding">
    <location>
        <position position="98"/>
    </location>
</feature>
<feature type="site" description="Essential for tiotidine binding and H2 selectivity">
    <location>
        <position position="186"/>
    </location>
</feature>
<feature type="site" description="Implicated in histamine binding">
    <location>
        <position position="190"/>
    </location>
</feature>
<feature type="lipid moiety-binding region" description="S-palmitoyl cysteine" evidence="4">
    <location>
        <position position="305"/>
    </location>
</feature>
<feature type="glycosylation site" description="N-linked (GlcNAc...) asparagine" evidence="1">
    <location>
        <position position="4"/>
    </location>
</feature>
<feature type="disulfide bond" evidence="2">
    <location>
        <begin position="91"/>
        <end position="174"/>
    </location>
</feature>
<feature type="mutagenesis site" description="Abolishes histamine binding." evidence="5">
    <original>D</original>
    <variation>N</variation>
    <location>
        <position position="98"/>
    </location>
</feature>
<feature type="mutagenesis site" description="Abolishes tiotidine, but not cimetidine binding." evidence="5">
    <original>D</original>
    <variation>A</variation>
    <variation>N</variation>
    <location>
        <position position="186"/>
    </location>
</feature>
<feature type="mutagenesis site" description="Diminishes histamine-stimulated activity." evidence="5">
    <original>T</original>
    <variation>A</variation>
    <variation>C</variation>
    <location>
        <position position="190"/>
    </location>
</feature>
<proteinExistence type="evidence at protein level"/>
<comment type="function">
    <text>The H2 subclass of histamine receptors mediates gastric acid secretion. The activity of this receptor is mediated by G proteins which activate adenylyl cyclase.</text>
</comment>
<comment type="subcellular location">
    <subcellularLocation>
        <location>Cell membrane</location>
        <topology>Multi-pass membrane protein</topology>
    </subcellularLocation>
</comment>
<comment type="tissue specificity">
    <text>Gastric fundus and, to a lesser extent, in brain.</text>
</comment>
<comment type="similarity">
    <text evidence="2">Belongs to the G-protein coupled receptor 1 family.</text>
</comment>
<protein>
    <recommendedName>
        <fullName>Histamine H2 receptor</fullName>
        <shortName>H2R</shortName>
        <shortName>HH2R</shortName>
    </recommendedName>
    <alternativeName>
        <fullName>Gastric receptor I</fullName>
    </alternativeName>
</protein>
<accession>P17124</accession>
<sequence>MISNGTGSSFCLDSPPCRITVSVVLTVLILITIAGNVVVCLAVGLNRRLRSLTNCFIVSLAITDLLLGLLVLPFSAFYQLSCRWSFGKVFCNIYTSLDVMLCTASILNLFMISLDRYCAVTDPLRYPVLITPVRVAVSLVLIWVISITLSFLSIHLGWNSRNETSSFNHTIPKCKVQVNLVYGLVDGLVTFYLPLLVMCITYYRIFKIARDQAKRIHHMGSWKAATIGEHKATVTLAAVMGAFIICWFPYFTVFVYRGLKGDDAINEAFEAVVLWLGYANSALNPILYATLNRDFRTAYQQLFRCRPASHNAQETSLRSNSSQLARNQSREPMRQEEKPLKLQVWSGTEVTAPRGATDR</sequence>
<organism>
    <name type="scientific">Canis lupus familiaris</name>
    <name type="common">Dog</name>
    <name type="synonym">Canis familiaris</name>
    <dbReference type="NCBI Taxonomy" id="9615"/>
    <lineage>
        <taxon>Eukaryota</taxon>
        <taxon>Metazoa</taxon>
        <taxon>Chordata</taxon>
        <taxon>Craniata</taxon>
        <taxon>Vertebrata</taxon>
        <taxon>Euteleostomi</taxon>
        <taxon>Mammalia</taxon>
        <taxon>Eutheria</taxon>
        <taxon>Laurasiatheria</taxon>
        <taxon>Carnivora</taxon>
        <taxon>Caniformia</taxon>
        <taxon>Canidae</taxon>
        <taxon>Canis</taxon>
    </lineage>
</organism>
<evidence type="ECO:0000255" key="1"/>
<evidence type="ECO:0000255" key="2">
    <source>
        <dbReference type="PROSITE-ProRule" id="PRU00521"/>
    </source>
</evidence>
<evidence type="ECO:0000256" key="3">
    <source>
        <dbReference type="SAM" id="MobiDB-lite"/>
    </source>
</evidence>
<evidence type="ECO:0000269" key="4">
    <source>
    </source>
</evidence>
<evidence type="ECO:0000269" key="5">
    <source>
    </source>
</evidence>
<name>HRH2_CANLF</name>
<gene>
    <name type="primary">HRH2</name>
</gene>
<keyword id="KW-1003">Cell membrane</keyword>
<keyword id="KW-1015">Disulfide bond</keyword>
<keyword id="KW-0297">G-protein coupled receptor</keyword>
<keyword id="KW-0325">Glycoprotein</keyword>
<keyword id="KW-0449">Lipoprotein</keyword>
<keyword id="KW-0472">Membrane</keyword>
<keyword id="KW-0564">Palmitate</keyword>
<keyword id="KW-0675">Receptor</keyword>
<keyword id="KW-1185">Reference proteome</keyword>
<keyword id="KW-0807">Transducer</keyword>
<keyword id="KW-0812">Transmembrane</keyword>
<keyword id="KW-1133">Transmembrane helix</keyword>
<dbReference type="EMBL" id="M32701">
    <property type="protein sequence ID" value="AAA85637.1"/>
    <property type="molecule type" value="Genomic_DNA"/>
</dbReference>
<dbReference type="PIR" id="A39008">
    <property type="entry name" value="A39008"/>
</dbReference>
<dbReference type="RefSeq" id="NP_001182773.1">
    <property type="nucleotide sequence ID" value="NM_001195844.1"/>
</dbReference>
<dbReference type="RefSeq" id="XP_005618925.1">
    <property type="nucleotide sequence ID" value="XM_005618868.2"/>
</dbReference>
<dbReference type="RefSeq" id="XP_038518159.1">
    <property type="nucleotide sequence ID" value="XM_038662231.1"/>
</dbReference>
<dbReference type="SMR" id="P17124"/>
<dbReference type="FunCoup" id="P17124">
    <property type="interactions" value="254"/>
</dbReference>
<dbReference type="STRING" id="9615.ENSCAFP00000053813"/>
<dbReference type="GlyCosmos" id="P17124">
    <property type="glycosylation" value="1 site, No reported glycans"/>
</dbReference>
<dbReference type="SwissPalm" id="P17124"/>
<dbReference type="PaxDb" id="9612-ENSCAFP00000024584"/>
<dbReference type="Ensembl" id="ENSCAFT00000070476.2">
    <property type="protein sequence ID" value="ENSCAFP00000044054.1"/>
    <property type="gene ID" value="ENSCAFG00000016718.5"/>
</dbReference>
<dbReference type="Ensembl" id="ENSCAFT00845000497.1">
    <property type="protein sequence ID" value="ENSCAFP00845000340.1"/>
    <property type="gene ID" value="ENSCAFG00845000310.1"/>
</dbReference>
<dbReference type="GeneID" id="403812"/>
<dbReference type="KEGG" id="cfa:403812"/>
<dbReference type="CTD" id="3274"/>
<dbReference type="VEuPathDB" id="HostDB:ENSCAFG00845000310"/>
<dbReference type="VGNC" id="VGNC:41787">
    <property type="gene designation" value="HRH2"/>
</dbReference>
<dbReference type="eggNOG" id="KOG3656">
    <property type="taxonomic scope" value="Eukaryota"/>
</dbReference>
<dbReference type="GeneTree" id="ENSGT00940000158761"/>
<dbReference type="InParanoid" id="P17124"/>
<dbReference type="OrthoDB" id="5951059at2759"/>
<dbReference type="Reactome" id="R-CFA-390650">
    <property type="pathway name" value="Histamine receptors"/>
</dbReference>
<dbReference type="Proteomes" id="UP000002254">
    <property type="component" value="Chromosome 4"/>
</dbReference>
<dbReference type="Proteomes" id="UP000694429">
    <property type="component" value="Unplaced"/>
</dbReference>
<dbReference type="Proteomes" id="UP000694542">
    <property type="component" value="Unplaced"/>
</dbReference>
<dbReference type="Proteomes" id="UP000805418">
    <property type="component" value="Chromosome 4"/>
</dbReference>
<dbReference type="Bgee" id="ENSCAFG00000016718">
    <property type="expression patterns" value="Expressed in adipose tissue and 44 other cell types or tissues"/>
</dbReference>
<dbReference type="GO" id="GO:0030425">
    <property type="term" value="C:dendrite"/>
    <property type="evidence" value="ECO:0000318"/>
    <property type="project" value="GO_Central"/>
</dbReference>
<dbReference type="GO" id="GO:0005886">
    <property type="term" value="C:plasma membrane"/>
    <property type="evidence" value="ECO:0000318"/>
    <property type="project" value="GO_Central"/>
</dbReference>
<dbReference type="GO" id="GO:0045202">
    <property type="term" value="C:synapse"/>
    <property type="evidence" value="ECO:0007669"/>
    <property type="project" value="GOC"/>
</dbReference>
<dbReference type="GO" id="GO:0004969">
    <property type="term" value="F:histamine receptor activity"/>
    <property type="evidence" value="ECO:0000318"/>
    <property type="project" value="GO_Central"/>
</dbReference>
<dbReference type="GO" id="GO:0030594">
    <property type="term" value="F:neurotransmitter receptor activity"/>
    <property type="evidence" value="ECO:0000318"/>
    <property type="project" value="GO_Central"/>
</dbReference>
<dbReference type="GO" id="GO:0007268">
    <property type="term" value="P:chemical synaptic transmission"/>
    <property type="evidence" value="ECO:0000318"/>
    <property type="project" value="GO_Central"/>
</dbReference>
<dbReference type="GO" id="GO:0007187">
    <property type="term" value="P:G protein-coupled receptor signaling pathway, coupled to cyclic nucleotide second messenger"/>
    <property type="evidence" value="ECO:0000318"/>
    <property type="project" value="GO_Central"/>
</dbReference>
<dbReference type="GO" id="GO:0001696">
    <property type="term" value="P:gastric acid secretion"/>
    <property type="evidence" value="ECO:0007669"/>
    <property type="project" value="InterPro"/>
</dbReference>
<dbReference type="GO" id="GO:0045907">
    <property type="term" value="P:positive regulation of vasoconstriction"/>
    <property type="evidence" value="ECO:0007669"/>
    <property type="project" value="InterPro"/>
</dbReference>
<dbReference type="FunFam" id="1.20.1070.10:FF:000121">
    <property type="entry name" value="Histamine H2 receptor"/>
    <property type="match status" value="1"/>
</dbReference>
<dbReference type="Gene3D" id="1.20.1070.10">
    <property type="entry name" value="Rhodopsin 7-helix transmembrane proteins"/>
    <property type="match status" value="1"/>
</dbReference>
<dbReference type="InterPro" id="IPR000276">
    <property type="entry name" value="GPCR_Rhodpsn"/>
</dbReference>
<dbReference type="InterPro" id="IPR017452">
    <property type="entry name" value="GPCR_Rhodpsn_7TM"/>
</dbReference>
<dbReference type="InterPro" id="IPR000503">
    <property type="entry name" value="Histamine_H2_rcpt"/>
</dbReference>
<dbReference type="PANTHER" id="PTHR24247">
    <property type="entry name" value="5-HYDROXYTRYPTAMINE RECEPTOR"/>
    <property type="match status" value="1"/>
</dbReference>
<dbReference type="PANTHER" id="PTHR24247:SF278">
    <property type="entry name" value="HISTAMINE H2 RECEPTOR"/>
    <property type="match status" value="1"/>
</dbReference>
<dbReference type="Pfam" id="PF00001">
    <property type="entry name" value="7tm_1"/>
    <property type="match status" value="1"/>
</dbReference>
<dbReference type="PRINTS" id="PR00237">
    <property type="entry name" value="GPCRRHODOPSN"/>
</dbReference>
<dbReference type="PRINTS" id="PR00531">
    <property type="entry name" value="HISTAMINEH2R"/>
</dbReference>
<dbReference type="SMART" id="SM01381">
    <property type="entry name" value="7TM_GPCR_Srsx"/>
    <property type="match status" value="1"/>
</dbReference>
<dbReference type="SUPFAM" id="SSF81321">
    <property type="entry name" value="Family A G protein-coupled receptor-like"/>
    <property type="match status" value="1"/>
</dbReference>
<dbReference type="PROSITE" id="PS00237">
    <property type="entry name" value="G_PROTEIN_RECEP_F1_1"/>
    <property type="match status" value="1"/>
</dbReference>
<dbReference type="PROSITE" id="PS50262">
    <property type="entry name" value="G_PROTEIN_RECEP_F1_2"/>
    <property type="match status" value="1"/>
</dbReference>
<reference key="1">
    <citation type="journal article" date="1991" name="Proc. Natl. Acad. Sci. U.S.A.">
        <title>Molecular cloning of a gene encoding the histamine H2 receptor.</title>
        <authorList>
            <person name="Gantz I."/>
            <person name="Schaeffer M."/>
            <person name="Delvalle J."/>
            <person name="Logsdon C."/>
            <person name="Campbell V."/>
            <person name="Uhler M."/>
            <person name="Yamada T."/>
        </authorList>
    </citation>
    <scope>NUCLEOTIDE SEQUENCE [GENOMIC DNA]</scope>
</reference>
<reference key="2">
    <citation type="journal article" date="1992" name="J. Biol. Chem.">
        <title>Molecular basis for the interaction of histamine with the histamine H2 receptor.</title>
        <authorList>
            <person name="Gantz I."/>
            <person name="DelValle J."/>
            <person name="Wang L.-D."/>
            <person name="Tashiro T."/>
            <person name="Munzert G."/>
            <person name="Guo Y.-J."/>
            <person name="Konda Y."/>
            <person name="Yamada T."/>
        </authorList>
    </citation>
    <scope>MUTAGENESIS OF HISTAMINE-BINDING RESIDUES</scope>
</reference>
<reference key="3">
    <citation type="journal article" date="2001" name="Biochim. Biophys. Acta">
        <title>Palmitoylation of the canine histamine H2 receptor occurs at Cys(305) and is important for cell surface targeting.</title>
        <authorList>
            <person name="Fukushima Y."/>
            <person name="Saitoh T."/>
            <person name="Anai M."/>
            <person name="Ogihara T."/>
            <person name="Inukai K."/>
            <person name="Funaki M."/>
            <person name="Sakoda H."/>
            <person name="Onishi Y."/>
            <person name="Ono H."/>
            <person name="Fujishiro M."/>
            <person name="Ishikawa T."/>
            <person name="Takata K."/>
            <person name="Nagai R."/>
            <person name="Omata M."/>
            <person name="Asano T."/>
        </authorList>
    </citation>
    <scope>PALMITOYLATION AT CYS-305</scope>
</reference>